<gene>
    <name type="primary">araB</name>
    <name type="ordered locus">b0063</name>
    <name type="ordered locus">JW0062</name>
</gene>
<evidence type="ECO:0000269" key="1">
    <source>
    </source>
</evidence>
<evidence type="ECO:0000269" key="2">
    <source>
    </source>
</evidence>
<evidence type="ECO:0000269" key="3">
    <source>
    </source>
</evidence>
<evidence type="ECO:0000305" key="4"/>
<keyword id="KW-0054">Arabinose catabolism</keyword>
<keyword id="KW-0067">ATP-binding</keyword>
<keyword id="KW-0119">Carbohydrate metabolism</keyword>
<keyword id="KW-0903">Direct protein sequencing</keyword>
<keyword id="KW-0418">Kinase</keyword>
<keyword id="KW-0547">Nucleotide-binding</keyword>
<keyword id="KW-1185">Reference proteome</keyword>
<keyword id="KW-0808">Transferase</keyword>
<name>ARAB_ECOLI</name>
<accession>P08204</accession>
<accession>P78041</accession>
<sequence length="566" mass="61089">MAIAIGLDFGSDSVRALAVDCATGEEIATSVEWYPRWQKGQFCDAPNNQFRHHPRDYIESMEAALKTVLAELSVEQRAAVVGIGVDSTGSTPAPIDADGNVLALRPEFAENPNAMFVLWKDHTAVEEAEEITRLCHAPGNVDYSRYIGGIYSSEWFWAKILHVTRQDSAVAQSAASWIELCDWVPALLSGTTRPQDIRRGRCSAGHKSLWHESWGGLPPASFFDELDPILNRHLPSPLFTDTWTADIPVGTLCPEWAQRLGLPESVVISGGAFDCHMGAVGAGAQPNALVKVIGTSTCDILIADKQSVGERAVKGICGQVDGSVVPGFIGLEAGQSAFGDIYAWFGRVLGWPLEQLAAQHPELKTQINASQKQLLPALTEAWAKNPSLDHLPVVLDWFNGRRTPNANQRLKGVITDLNLATDAPLLFGGLIAATAFGARAIMECFTDQGIAVNNVMALGGIARKNQVIMQACCDVLNRPLQIVASDQCCALGAAIFAAVAAKVHADIPSAQQKMASAVEKTLQPCSEQAQRFEQLYRRYQQWAMSAEQHYLPTSAPAQAAQAVATL</sequence>
<organism>
    <name type="scientific">Escherichia coli (strain K12)</name>
    <dbReference type="NCBI Taxonomy" id="83333"/>
    <lineage>
        <taxon>Bacteria</taxon>
        <taxon>Pseudomonadati</taxon>
        <taxon>Pseudomonadota</taxon>
        <taxon>Gammaproteobacteria</taxon>
        <taxon>Enterobacterales</taxon>
        <taxon>Enterobacteriaceae</taxon>
        <taxon>Escherichia</taxon>
    </lineage>
</organism>
<reference key="1">
    <citation type="journal article" date="1986" name="Gene">
        <title>The organization of the araBAD operon of Escherichia coli.</title>
        <authorList>
            <person name="Lee N."/>
            <person name="Gielow W."/>
            <person name="Martin R."/>
            <person name="Hamilton E."/>
            <person name="Fowler A."/>
        </authorList>
    </citation>
    <scope>NUCLEOTIDE SEQUENCE [GENOMIC DNA]</scope>
</reference>
<reference key="2">
    <citation type="journal article" date="1992" name="Nucleic Acids Res.">
        <title>Systematic sequencing of the Escherichia coli genome: analysis of the 0-2.4 min region.</title>
        <authorList>
            <person name="Yura T."/>
            <person name="Mori H."/>
            <person name="Nagai H."/>
            <person name="Nagata T."/>
            <person name="Ishihama A."/>
            <person name="Fujita N."/>
            <person name="Isono K."/>
            <person name="Mizobuchi K."/>
            <person name="Nakata A."/>
        </authorList>
    </citation>
    <scope>NUCLEOTIDE SEQUENCE [LARGE SCALE GENOMIC DNA]</scope>
    <source>
        <strain>K12</strain>
    </source>
</reference>
<reference key="3">
    <citation type="journal article" date="1997" name="Science">
        <title>The complete genome sequence of Escherichia coli K-12.</title>
        <authorList>
            <person name="Blattner F.R."/>
            <person name="Plunkett G. III"/>
            <person name="Bloch C.A."/>
            <person name="Perna N.T."/>
            <person name="Burland V."/>
            <person name="Riley M."/>
            <person name="Collado-Vides J."/>
            <person name="Glasner J.D."/>
            <person name="Rode C.K."/>
            <person name="Mayhew G.F."/>
            <person name="Gregor J."/>
            <person name="Davis N.W."/>
            <person name="Kirkpatrick H.A."/>
            <person name="Goeden M.A."/>
            <person name="Rose D.J."/>
            <person name="Mau B."/>
            <person name="Shao Y."/>
        </authorList>
    </citation>
    <scope>NUCLEOTIDE SEQUENCE [LARGE SCALE GENOMIC DNA]</scope>
    <source>
        <strain>K12 / MG1655 / ATCC 47076</strain>
    </source>
</reference>
<reference key="4">
    <citation type="journal article" date="2006" name="Mol. Syst. Biol.">
        <title>Highly accurate genome sequences of Escherichia coli K-12 strains MG1655 and W3110.</title>
        <authorList>
            <person name="Hayashi K."/>
            <person name="Morooka N."/>
            <person name="Yamamoto Y."/>
            <person name="Fujita K."/>
            <person name="Isono K."/>
            <person name="Choi S."/>
            <person name="Ohtsubo E."/>
            <person name="Baba T."/>
            <person name="Wanner B.L."/>
            <person name="Mori H."/>
            <person name="Horiuchi T."/>
        </authorList>
    </citation>
    <scope>NUCLEOTIDE SEQUENCE [LARGE SCALE GENOMIC DNA]</scope>
    <scope>SEQUENCE REVISION</scope>
    <source>
        <strain>K12 / W3110 / ATCC 27325 / DSM 5911</strain>
    </source>
</reference>
<reference key="5">
    <citation type="journal article" date="1977" name="Proc. Natl. Acad. Sci. U.S.A.">
        <title>Nucleotide sequence of the 5' end of araBAD operon messenger RNA in Escherichia coli B/r.</title>
        <authorList>
            <person name="Lee N."/>
            <person name="Carbon J."/>
        </authorList>
    </citation>
    <scope>NUCLEOTIDE SEQUENCE [MRNA] OF 1-14</scope>
    <scope>PROTEIN SEQUENCE OF 2-14</scope>
</reference>
<reference key="6">
    <citation type="journal article" date="1978" name="J. Biol. Chem.">
        <title>Nucleotide sequence of the L-arabinose regulatory region of Escherichia coli K12.</title>
        <authorList>
            <person name="Smith B.R."/>
            <person name="Schleif R."/>
        </authorList>
    </citation>
    <scope>NUCLEOTIDE SEQUENCE [GENOMIC DNA] OF 1-6</scope>
    <source>
        <strain>K12</strain>
    </source>
</reference>
<reference key="7">
    <citation type="journal article" date="1977" name="Cell">
        <title>The araC promoter: transcription, mapping and interaction with the araBAD promoter.</title>
        <authorList>
            <person name="Hirsh J."/>
            <person name="Schleif R."/>
        </authorList>
    </citation>
    <scope>INDUCTION</scope>
</reference>
<reference key="8">
    <citation type="journal article" date="1987" name="Proc. Natl. Acad. Sci. U.S.A.">
        <title>Arabinose-induced binding of AraC protein to araI2 activates the araBAD operon promoter.</title>
        <authorList>
            <person name="Lee N."/>
            <person name="Francklyn C."/>
            <person name="Hamilton E.P."/>
        </authorList>
    </citation>
    <scope>INDUCTION</scope>
</reference>
<reference key="9">
    <citation type="journal article" date="1997" name="Electrophoresis">
        <title>Escherichia coli proteome analysis using the gene-protein database.</title>
        <authorList>
            <person name="VanBogelen R.A."/>
            <person name="Abshire K.Z."/>
            <person name="Moldover B."/>
            <person name="Olson E.R."/>
            <person name="Neidhardt F.C."/>
        </authorList>
    </citation>
    <scope>IDENTIFICATION BY 2D-GEL</scope>
</reference>
<dbReference type="EC" id="2.7.1.16"/>
<dbReference type="EMBL" id="M15263">
    <property type="protein sequence ID" value="AAA23462.1"/>
    <property type="molecule type" value="Genomic_DNA"/>
</dbReference>
<dbReference type="EMBL" id="J01641">
    <property type="protein sequence ID" value="AAA23467.1"/>
    <property type="molecule type" value="Genomic_DNA"/>
</dbReference>
<dbReference type="EMBL" id="U00096">
    <property type="protein sequence ID" value="AAC73174.1"/>
    <property type="molecule type" value="Genomic_DNA"/>
</dbReference>
<dbReference type="EMBL" id="AP009048">
    <property type="protein sequence ID" value="BAB96632.2"/>
    <property type="molecule type" value="Genomic_DNA"/>
</dbReference>
<dbReference type="EMBL" id="K01304">
    <property type="protein sequence ID" value="AAA23465.1"/>
    <property type="molecule type" value="mRNA"/>
</dbReference>
<dbReference type="PIR" id="G64727">
    <property type="entry name" value="KIECRU"/>
</dbReference>
<dbReference type="RefSeq" id="NP_414605.1">
    <property type="nucleotide sequence ID" value="NC_000913.3"/>
</dbReference>
<dbReference type="RefSeq" id="WP_000951856.1">
    <property type="nucleotide sequence ID" value="NZ_STEB01000010.1"/>
</dbReference>
<dbReference type="SMR" id="P08204"/>
<dbReference type="BioGRID" id="4261483">
    <property type="interactions" value="1"/>
</dbReference>
<dbReference type="FunCoup" id="P08204">
    <property type="interactions" value="683"/>
</dbReference>
<dbReference type="IntAct" id="P08204">
    <property type="interactions" value="1"/>
</dbReference>
<dbReference type="STRING" id="511145.b0063"/>
<dbReference type="PaxDb" id="511145-b0063"/>
<dbReference type="DNASU" id="946017"/>
<dbReference type="EnsemblBacteria" id="AAC73174">
    <property type="protein sequence ID" value="AAC73174"/>
    <property type="gene ID" value="b0063"/>
</dbReference>
<dbReference type="GeneID" id="946017"/>
<dbReference type="KEGG" id="ecj:JW0062"/>
<dbReference type="KEGG" id="eco:b0063"/>
<dbReference type="PATRIC" id="fig|1411691.4.peg.2220"/>
<dbReference type="EchoBASE" id="EB0051"/>
<dbReference type="eggNOG" id="COG1069">
    <property type="taxonomic scope" value="Bacteria"/>
</dbReference>
<dbReference type="HOGENOM" id="CLU_009281_9_1_6"/>
<dbReference type="InParanoid" id="P08204"/>
<dbReference type="OMA" id="HKAMWHE"/>
<dbReference type="OrthoDB" id="9805576at2"/>
<dbReference type="PhylomeDB" id="P08204"/>
<dbReference type="BioCyc" id="EcoCyc:RIBULOKIN-MONOMER"/>
<dbReference type="BioCyc" id="MetaCyc:RIBULOKIN-MONOMER"/>
<dbReference type="UniPathway" id="UPA00145">
    <property type="reaction ID" value="UER00566"/>
</dbReference>
<dbReference type="PRO" id="PR:P08204"/>
<dbReference type="Proteomes" id="UP000000625">
    <property type="component" value="Chromosome"/>
</dbReference>
<dbReference type="GO" id="GO:0005737">
    <property type="term" value="C:cytoplasm"/>
    <property type="evidence" value="ECO:0000314"/>
    <property type="project" value="EcoliWiki"/>
</dbReference>
<dbReference type="GO" id="GO:0005524">
    <property type="term" value="F:ATP binding"/>
    <property type="evidence" value="ECO:0007669"/>
    <property type="project" value="UniProtKB-KW"/>
</dbReference>
<dbReference type="GO" id="GO:0019150">
    <property type="term" value="F:D-ribulokinase activity"/>
    <property type="evidence" value="ECO:0000318"/>
    <property type="project" value="GO_Central"/>
</dbReference>
<dbReference type="GO" id="GO:0016773">
    <property type="term" value="F:phosphotransferase activity, alcohol group as acceptor"/>
    <property type="evidence" value="ECO:0000314"/>
    <property type="project" value="EcoliWiki"/>
</dbReference>
<dbReference type="GO" id="GO:0008741">
    <property type="term" value="F:ribulokinase activity"/>
    <property type="evidence" value="ECO:0000314"/>
    <property type="project" value="EcoCyc"/>
</dbReference>
<dbReference type="GO" id="GO:0019568">
    <property type="term" value="P:arabinose catabolic process"/>
    <property type="evidence" value="ECO:0000314"/>
    <property type="project" value="EcoliWiki"/>
</dbReference>
<dbReference type="GO" id="GO:0016052">
    <property type="term" value="P:carbohydrate catabolic process"/>
    <property type="evidence" value="ECO:0000314"/>
    <property type="project" value="EcoliWiki"/>
</dbReference>
<dbReference type="GO" id="GO:0019572">
    <property type="term" value="P:L-arabinose catabolic process"/>
    <property type="evidence" value="ECO:0000314"/>
    <property type="project" value="EcoliWiki"/>
</dbReference>
<dbReference type="GO" id="GO:0019569">
    <property type="term" value="P:L-arabinose catabolic process to xylulose 5-phosphate"/>
    <property type="evidence" value="ECO:0000270"/>
    <property type="project" value="EcoCyc"/>
</dbReference>
<dbReference type="GO" id="GO:0019321">
    <property type="term" value="P:pentose metabolic process"/>
    <property type="evidence" value="ECO:0000318"/>
    <property type="project" value="GO_Central"/>
</dbReference>
<dbReference type="CDD" id="cd07781">
    <property type="entry name" value="ASKHA_NBD_FGGY_L-RBK"/>
    <property type="match status" value="1"/>
</dbReference>
<dbReference type="Gene3D" id="1.20.58.2240">
    <property type="match status" value="1"/>
</dbReference>
<dbReference type="Gene3D" id="3.30.420.40">
    <property type="match status" value="1"/>
</dbReference>
<dbReference type="HAMAP" id="MF_00520">
    <property type="entry name" value="Ribulokinase"/>
    <property type="match status" value="1"/>
</dbReference>
<dbReference type="InterPro" id="IPR043129">
    <property type="entry name" value="ATPase_NBD"/>
</dbReference>
<dbReference type="InterPro" id="IPR018485">
    <property type="entry name" value="FGGY_C"/>
</dbReference>
<dbReference type="InterPro" id="IPR005929">
    <property type="entry name" value="Ribulokinase"/>
</dbReference>
<dbReference type="NCBIfam" id="TIGR01234">
    <property type="entry name" value="L-ribulokinase"/>
    <property type="match status" value="1"/>
</dbReference>
<dbReference type="NCBIfam" id="NF003154">
    <property type="entry name" value="PRK04123.1"/>
    <property type="match status" value="1"/>
</dbReference>
<dbReference type="PANTHER" id="PTHR43435:SF4">
    <property type="entry name" value="FGGY CARBOHYDRATE KINASE DOMAIN-CONTAINING PROTEIN"/>
    <property type="match status" value="1"/>
</dbReference>
<dbReference type="PANTHER" id="PTHR43435">
    <property type="entry name" value="RIBULOKINASE"/>
    <property type="match status" value="1"/>
</dbReference>
<dbReference type="Pfam" id="PF02782">
    <property type="entry name" value="FGGY_C"/>
    <property type="match status" value="1"/>
</dbReference>
<dbReference type="SUPFAM" id="SSF53067">
    <property type="entry name" value="Actin-like ATPase domain"/>
    <property type="match status" value="2"/>
</dbReference>
<comment type="catalytic activity">
    <reaction>
        <text>D-ribulose + ATP = D-ribulose 5-phosphate + ADP + H(+)</text>
        <dbReference type="Rhea" id="RHEA:17601"/>
        <dbReference type="ChEBI" id="CHEBI:15378"/>
        <dbReference type="ChEBI" id="CHEBI:17173"/>
        <dbReference type="ChEBI" id="CHEBI:30616"/>
        <dbReference type="ChEBI" id="CHEBI:58121"/>
        <dbReference type="ChEBI" id="CHEBI:456216"/>
        <dbReference type="EC" id="2.7.1.16"/>
    </reaction>
</comment>
<comment type="catalytic activity">
    <reaction>
        <text>L-ribulose + ATP = L-ribulose 5-phosphate + ADP + H(+)</text>
        <dbReference type="Rhea" id="RHEA:22072"/>
        <dbReference type="ChEBI" id="CHEBI:15378"/>
        <dbReference type="ChEBI" id="CHEBI:16880"/>
        <dbReference type="ChEBI" id="CHEBI:30616"/>
        <dbReference type="ChEBI" id="CHEBI:58226"/>
        <dbReference type="ChEBI" id="CHEBI:456216"/>
        <dbReference type="EC" id="2.7.1.16"/>
    </reaction>
</comment>
<comment type="pathway">
    <text>Carbohydrate degradation; L-arabinose degradation via L-ribulose; D-xylulose 5-phosphate from L-arabinose (bacterial route): step 2/3.</text>
</comment>
<comment type="induction">
    <text evidence="2 3">Induced by arabinose. Transcription is dependent on the transcription factor AraC, the cAMP receptor protein (CRP) and cAMP.</text>
</comment>
<comment type="similarity">
    <text evidence="4">Belongs to the ribulokinase family.</text>
</comment>
<proteinExistence type="evidence at protein level"/>
<protein>
    <recommendedName>
        <fullName>Ribulokinase</fullName>
        <ecNumber>2.7.1.16</ecNumber>
    </recommendedName>
</protein>
<feature type="initiator methionine" description="Removed" evidence="1">
    <location>
        <position position="1"/>
    </location>
</feature>
<feature type="chain" id="PRO_0000198358" description="Ribulokinase">
    <location>
        <begin position="2"/>
        <end position="566"/>
    </location>
</feature>
<feature type="sequence conflict" description="In Ref. 1; AAA23462." evidence="4" ref="1">
    <original>T</original>
    <variation>S</variation>
    <location>
        <position position="23"/>
    </location>
</feature>
<feature type="sequence conflict" description="In Ref. 1; AAA23462." evidence="4" ref="1">
    <original>EA</original>
    <variation>RS</variation>
    <location>
        <begin position="127"/>
        <end position="128"/>
    </location>
</feature>
<feature type="sequence conflict" description="In Ref. 1; AAA23462." evidence="4" ref="1">
    <original>G</original>
    <variation>S</variation>
    <location>
        <position position="350"/>
    </location>
</feature>
<feature type="sequence conflict" description="In Ref. 1; AAA23462." evidence="4" ref="1">
    <original>T</original>
    <variation>A</variation>
    <location>
        <position position="365"/>
    </location>
</feature>
<feature type="sequence conflict" description="In Ref. 1; AAA23462." evidence="4" ref="1">
    <original>T</original>
    <variation>S</variation>
    <location>
        <position position="403"/>
    </location>
</feature>
<feature type="sequence conflict" description="In Ref. 1; AAA23462." evidence="4" ref="1">
    <original>C</original>
    <variation>R</variation>
    <location>
        <position position="525"/>
    </location>
</feature>